<dbReference type="EMBL" id="AF367759">
    <property type="protein sequence ID" value="AAK53399.1"/>
    <property type="molecule type" value="mRNA"/>
</dbReference>
<dbReference type="EMBL" id="AK016927">
    <property type="protein sequence ID" value="BAB30501.1"/>
    <property type="molecule type" value="mRNA"/>
</dbReference>
<dbReference type="CCDS" id="CCDS35509.1">
    <molecule id="Q925E1-1"/>
</dbReference>
<dbReference type="RefSeq" id="NP_001277322.1">
    <property type="nucleotide sequence ID" value="NM_001290393.1"/>
</dbReference>
<dbReference type="BioGRID" id="214473">
    <property type="interactions" value="6"/>
</dbReference>
<dbReference type="FunCoup" id="Q925E1">
    <property type="interactions" value="476"/>
</dbReference>
<dbReference type="STRING" id="10090.ENSMUSP00000118101"/>
<dbReference type="iPTMnet" id="Q925E1"/>
<dbReference type="PhosphoSitePlus" id="Q925E1"/>
<dbReference type="PaxDb" id="10090-ENSMUSP00000118101"/>
<dbReference type="ProteomicsDB" id="261093">
    <molecule id="Q925E1-1"/>
</dbReference>
<dbReference type="ProteomicsDB" id="261094">
    <molecule id="Q925E1-2"/>
</dbReference>
<dbReference type="DNASU" id="71096"/>
<dbReference type="GeneID" id="71096"/>
<dbReference type="KEGG" id="mmu:71096"/>
<dbReference type="UCSC" id="uc007agg.2">
    <molecule id="Q925E1-2"/>
    <property type="organism name" value="mouse"/>
</dbReference>
<dbReference type="UCSC" id="uc011whz.2">
    <molecule id="Q925E1-1"/>
    <property type="organism name" value="mouse"/>
</dbReference>
<dbReference type="AGR" id="MGI:1918346"/>
<dbReference type="CTD" id="54212"/>
<dbReference type="MGI" id="MGI:1918346">
    <property type="gene designation" value="Sntg1"/>
</dbReference>
<dbReference type="eggNOG" id="KOG3549">
    <property type="taxonomic scope" value="Eukaryota"/>
</dbReference>
<dbReference type="InParanoid" id="Q925E1"/>
<dbReference type="OrthoDB" id="9975356at2759"/>
<dbReference type="PhylomeDB" id="Q925E1"/>
<dbReference type="BioGRID-ORCS" id="71096">
    <property type="hits" value="2 hits in 78 CRISPR screens"/>
</dbReference>
<dbReference type="ChiTaRS" id="Sntg1">
    <property type="organism name" value="mouse"/>
</dbReference>
<dbReference type="PRO" id="PR:Q925E1"/>
<dbReference type="Proteomes" id="UP000000589">
    <property type="component" value="Unplaced"/>
</dbReference>
<dbReference type="RNAct" id="Q925E1">
    <property type="molecule type" value="protein"/>
</dbReference>
<dbReference type="GO" id="GO:0005737">
    <property type="term" value="C:cytoplasm"/>
    <property type="evidence" value="ECO:0007669"/>
    <property type="project" value="UniProtKB-KW"/>
</dbReference>
<dbReference type="GO" id="GO:0005856">
    <property type="term" value="C:cytoskeleton"/>
    <property type="evidence" value="ECO:0007669"/>
    <property type="project" value="UniProtKB-SubCell"/>
</dbReference>
<dbReference type="GO" id="GO:0005634">
    <property type="term" value="C:nucleus"/>
    <property type="evidence" value="ECO:0007669"/>
    <property type="project" value="UniProtKB-SubCell"/>
</dbReference>
<dbReference type="GO" id="GO:0003779">
    <property type="term" value="F:actin binding"/>
    <property type="evidence" value="ECO:0007669"/>
    <property type="project" value="UniProtKB-KW"/>
</dbReference>
<dbReference type="GO" id="GO:0005198">
    <property type="term" value="F:structural molecule activity"/>
    <property type="evidence" value="ECO:0007669"/>
    <property type="project" value="InterPro"/>
</dbReference>
<dbReference type="CDD" id="cd06801">
    <property type="entry name" value="PDZ_syntrophin-like"/>
    <property type="match status" value="1"/>
</dbReference>
<dbReference type="FunFam" id="2.30.29.30:FF:000448">
    <property type="entry name" value="Syntrophin gamma 1"/>
    <property type="match status" value="1"/>
</dbReference>
<dbReference type="FunFam" id="2.30.42.10:FF:000080">
    <property type="entry name" value="Syntrophin gamma 1"/>
    <property type="match status" value="1"/>
</dbReference>
<dbReference type="Gene3D" id="2.30.42.10">
    <property type="match status" value="1"/>
</dbReference>
<dbReference type="Gene3D" id="2.30.29.30">
    <property type="entry name" value="Pleckstrin-homology domain (PH domain)/Phosphotyrosine-binding domain (PTB)"/>
    <property type="match status" value="1"/>
</dbReference>
<dbReference type="InterPro" id="IPR001478">
    <property type="entry name" value="PDZ"/>
</dbReference>
<dbReference type="InterPro" id="IPR036034">
    <property type="entry name" value="PDZ_sf"/>
</dbReference>
<dbReference type="InterPro" id="IPR011993">
    <property type="entry name" value="PH-like_dom_sf"/>
</dbReference>
<dbReference type="InterPro" id="IPR001849">
    <property type="entry name" value="PH_domain"/>
</dbReference>
<dbReference type="InterPro" id="IPR015482">
    <property type="entry name" value="Syntrophin"/>
</dbReference>
<dbReference type="InterPro" id="IPR055108">
    <property type="entry name" value="Syntrophin_4th"/>
</dbReference>
<dbReference type="PANTHER" id="PTHR10554:SF2">
    <property type="entry name" value="GAMMA-1-SYNTROPHIN"/>
    <property type="match status" value="1"/>
</dbReference>
<dbReference type="PANTHER" id="PTHR10554">
    <property type="entry name" value="SYNTROPHIN"/>
    <property type="match status" value="1"/>
</dbReference>
<dbReference type="Pfam" id="PF00595">
    <property type="entry name" value="PDZ"/>
    <property type="match status" value="1"/>
</dbReference>
<dbReference type="Pfam" id="PF23012">
    <property type="entry name" value="Syntrophin_4th"/>
    <property type="match status" value="1"/>
</dbReference>
<dbReference type="SMART" id="SM00228">
    <property type="entry name" value="PDZ"/>
    <property type="match status" value="1"/>
</dbReference>
<dbReference type="SUPFAM" id="SSF50156">
    <property type="entry name" value="PDZ domain-like"/>
    <property type="match status" value="1"/>
</dbReference>
<dbReference type="SUPFAM" id="SSF50729">
    <property type="entry name" value="PH domain-like"/>
    <property type="match status" value="2"/>
</dbReference>
<dbReference type="PROSITE" id="PS50106">
    <property type="entry name" value="PDZ"/>
    <property type="match status" value="1"/>
</dbReference>
<dbReference type="PROSITE" id="PS50003">
    <property type="entry name" value="PH_DOMAIN"/>
    <property type="match status" value="1"/>
</dbReference>
<reference key="1">
    <citation type="submission" date="2001-04" db="EMBL/GenBank/DDBJ databases">
        <title>Cloning and characterization of mouse gamma syntrophins.</title>
        <authorList>
            <person name="Alessi A."/>
            <person name="Adams M.E."/>
            <person name="Froehner S.C."/>
        </authorList>
    </citation>
    <scope>NUCLEOTIDE SEQUENCE [MRNA] (ISOFORM 1)</scope>
    <source>
        <strain>C57BL/6J</strain>
    </source>
</reference>
<reference key="2">
    <citation type="journal article" date="2005" name="Science">
        <title>The transcriptional landscape of the mammalian genome.</title>
        <authorList>
            <person name="Carninci P."/>
            <person name="Kasukawa T."/>
            <person name="Katayama S."/>
            <person name="Gough J."/>
            <person name="Frith M.C."/>
            <person name="Maeda N."/>
            <person name="Oyama R."/>
            <person name="Ravasi T."/>
            <person name="Lenhard B."/>
            <person name="Wells C."/>
            <person name="Kodzius R."/>
            <person name="Shimokawa K."/>
            <person name="Bajic V.B."/>
            <person name="Brenner S.E."/>
            <person name="Batalov S."/>
            <person name="Forrest A.R."/>
            <person name="Zavolan M."/>
            <person name="Davis M.J."/>
            <person name="Wilming L.G."/>
            <person name="Aidinis V."/>
            <person name="Allen J.E."/>
            <person name="Ambesi-Impiombato A."/>
            <person name="Apweiler R."/>
            <person name="Aturaliya R.N."/>
            <person name="Bailey T.L."/>
            <person name="Bansal M."/>
            <person name="Baxter L."/>
            <person name="Beisel K.W."/>
            <person name="Bersano T."/>
            <person name="Bono H."/>
            <person name="Chalk A.M."/>
            <person name="Chiu K.P."/>
            <person name="Choudhary V."/>
            <person name="Christoffels A."/>
            <person name="Clutterbuck D.R."/>
            <person name="Crowe M.L."/>
            <person name="Dalla E."/>
            <person name="Dalrymple B.P."/>
            <person name="de Bono B."/>
            <person name="Della Gatta G."/>
            <person name="di Bernardo D."/>
            <person name="Down T."/>
            <person name="Engstrom P."/>
            <person name="Fagiolini M."/>
            <person name="Faulkner G."/>
            <person name="Fletcher C.F."/>
            <person name="Fukushima T."/>
            <person name="Furuno M."/>
            <person name="Futaki S."/>
            <person name="Gariboldi M."/>
            <person name="Georgii-Hemming P."/>
            <person name="Gingeras T.R."/>
            <person name="Gojobori T."/>
            <person name="Green R.E."/>
            <person name="Gustincich S."/>
            <person name="Harbers M."/>
            <person name="Hayashi Y."/>
            <person name="Hensch T.K."/>
            <person name="Hirokawa N."/>
            <person name="Hill D."/>
            <person name="Huminiecki L."/>
            <person name="Iacono M."/>
            <person name="Ikeo K."/>
            <person name="Iwama A."/>
            <person name="Ishikawa T."/>
            <person name="Jakt M."/>
            <person name="Kanapin A."/>
            <person name="Katoh M."/>
            <person name="Kawasawa Y."/>
            <person name="Kelso J."/>
            <person name="Kitamura H."/>
            <person name="Kitano H."/>
            <person name="Kollias G."/>
            <person name="Krishnan S.P."/>
            <person name="Kruger A."/>
            <person name="Kummerfeld S.K."/>
            <person name="Kurochkin I.V."/>
            <person name="Lareau L.F."/>
            <person name="Lazarevic D."/>
            <person name="Lipovich L."/>
            <person name="Liu J."/>
            <person name="Liuni S."/>
            <person name="McWilliam S."/>
            <person name="Madan Babu M."/>
            <person name="Madera M."/>
            <person name="Marchionni L."/>
            <person name="Matsuda H."/>
            <person name="Matsuzawa S."/>
            <person name="Miki H."/>
            <person name="Mignone F."/>
            <person name="Miyake S."/>
            <person name="Morris K."/>
            <person name="Mottagui-Tabar S."/>
            <person name="Mulder N."/>
            <person name="Nakano N."/>
            <person name="Nakauchi H."/>
            <person name="Ng P."/>
            <person name="Nilsson R."/>
            <person name="Nishiguchi S."/>
            <person name="Nishikawa S."/>
            <person name="Nori F."/>
            <person name="Ohara O."/>
            <person name="Okazaki Y."/>
            <person name="Orlando V."/>
            <person name="Pang K.C."/>
            <person name="Pavan W.J."/>
            <person name="Pavesi G."/>
            <person name="Pesole G."/>
            <person name="Petrovsky N."/>
            <person name="Piazza S."/>
            <person name="Reed J."/>
            <person name="Reid J.F."/>
            <person name="Ring B.Z."/>
            <person name="Ringwald M."/>
            <person name="Rost B."/>
            <person name="Ruan Y."/>
            <person name="Salzberg S.L."/>
            <person name="Sandelin A."/>
            <person name="Schneider C."/>
            <person name="Schoenbach C."/>
            <person name="Sekiguchi K."/>
            <person name="Semple C.A."/>
            <person name="Seno S."/>
            <person name="Sessa L."/>
            <person name="Sheng Y."/>
            <person name="Shibata Y."/>
            <person name="Shimada H."/>
            <person name="Shimada K."/>
            <person name="Silva D."/>
            <person name="Sinclair B."/>
            <person name="Sperling S."/>
            <person name="Stupka E."/>
            <person name="Sugiura K."/>
            <person name="Sultana R."/>
            <person name="Takenaka Y."/>
            <person name="Taki K."/>
            <person name="Tammoja K."/>
            <person name="Tan S.L."/>
            <person name="Tang S."/>
            <person name="Taylor M.S."/>
            <person name="Tegner J."/>
            <person name="Teichmann S.A."/>
            <person name="Ueda H.R."/>
            <person name="van Nimwegen E."/>
            <person name="Verardo R."/>
            <person name="Wei C.L."/>
            <person name="Yagi K."/>
            <person name="Yamanishi H."/>
            <person name="Zabarovsky E."/>
            <person name="Zhu S."/>
            <person name="Zimmer A."/>
            <person name="Hide W."/>
            <person name="Bult C."/>
            <person name="Grimmond S.M."/>
            <person name="Teasdale R.D."/>
            <person name="Liu E.T."/>
            <person name="Brusic V."/>
            <person name="Quackenbush J."/>
            <person name="Wahlestedt C."/>
            <person name="Mattick J.S."/>
            <person name="Hume D.A."/>
            <person name="Kai C."/>
            <person name="Sasaki D."/>
            <person name="Tomaru Y."/>
            <person name="Fukuda S."/>
            <person name="Kanamori-Katayama M."/>
            <person name="Suzuki M."/>
            <person name="Aoki J."/>
            <person name="Arakawa T."/>
            <person name="Iida J."/>
            <person name="Imamura K."/>
            <person name="Itoh M."/>
            <person name="Kato T."/>
            <person name="Kawaji H."/>
            <person name="Kawagashira N."/>
            <person name="Kawashima T."/>
            <person name="Kojima M."/>
            <person name="Kondo S."/>
            <person name="Konno H."/>
            <person name="Nakano K."/>
            <person name="Ninomiya N."/>
            <person name="Nishio T."/>
            <person name="Okada M."/>
            <person name="Plessy C."/>
            <person name="Shibata K."/>
            <person name="Shiraki T."/>
            <person name="Suzuki S."/>
            <person name="Tagami M."/>
            <person name="Waki K."/>
            <person name="Watahiki A."/>
            <person name="Okamura-Oho Y."/>
            <person name="Suzuki H."/>
            <person name="Kawai J."/>
            <person name="Hayashizaki Y."/>
        </authorList>
    </citation>
    <scope>NUCLEOTIDE SEQUENCE [LARGE SCALE MRNA] (ISOFORM 2)</scope>
    <source>
        <strain>C57BL/6J</strain>
        <tissue>Testis</tissue>
    </source>
</reference>
<sequence length="517" mass="57982">MDFRTTCEETKTGVCLLQDGNQEPFKVRLHLARDLLMLQEQDVLCVSGEPFYSGERTVTIRRQTVGGFGLSIKGGAEHNIPVVISKISKEQRAELSGLLFIGDAILQINGINVRKCRHEEVVQVLRNAGEEVTLTVSFLKRAPAFLKLPVNEDCACAPSDQSSGTSSPLCDSGLHLNYHPNNTDTLSCSSWPTSPGLRWEKRWCDLRLIPLLHARFSQYVPGTDLSRQNESQVVAVDGVCSGILQCLSAEDCMDWLQAIASNISNLTKHNIKKINRNFPVNQQIVYMGWCEAREQESLQDRVYTPVFLALRGSCLYRFLSPPVTTWDWTRAEKTFSVCEIMCKVLKDSDLLDRRKHCFTMQSECGEDLYFSVELESDLAQWERAFQTATFLEVERIQCKTYACVLESHLMGLTIDFSTGFICFDAATKAVLWRYKFSQLKGSSDDGKSKIKFLFQNPDTKQIEAKELEFSNLFAVLHCIHSFFAAKVACLDPLFLGNQAATTAAVSSASTSKAKHLA</sequence>
<evidence type="ECO:0000250" key="1"/>
<evidence type="ECO:0000255" key="2">
    <source>
        <dbReference type="PROSITE-ProRule" id="PRU00143"/>
    </source>
</evidence>
<evidence type="ECO:0000255" key="3">
    <source>
        <dbReference type="PROSITE-ProRule" id="PRU00145"/>
    </source>
</evidence>
<evidence type="ECO:0000303" key="4">
    <source>
    </source>
</evidence>
<evidence type="ECO:0000305" key="5"/>
<feature type="chain" id="PRO_0000184014" description="Gamma-1-syntrophin">
    <location>
        <begin position="1"/>
        <end position="517"/>
    </location>
</feature>
<feature type="domain" description="PDZ" evidence="2">
    <location>
        <begin position="57"/>
        <end position="140"/>
    </location>
</feature>
<feature type="domain" description="PH" evidence="3">
    <location>
        <begin position="283"/>
        <end position="390"/>
    </location>
</feature>
<feature type="splice variant" id="VSP_006361" description="In isoform 2." evidence="4">
    <location>
        <begin position="1"/>
        <end position="275"/>
    </location>
</feature>
<feature type="splice variant" id="VSP_006362" description="In isoform 2." evidence="4">
    <original>RNFPVNQQ</original>
    <variation>MIKHLPSY</variation>
    <location>
        <begin position="276"/>
        <end position="283"/>
    </location>
</feature>
<gene>
    <name type="primary">Sntg1</name>
</gene>
<accession>Q925E1</accession>
<accession>Q9D3Z5</accession>
<organism>
    <name type="scientific">Mus musculus</name>
    <name type="common">Mouse</name>
    <dbReference type="NCBI Taxonomy" id="10090"/>
    <lineage>
        <taxon>Eukaryota</taxon>
        <taxon>Metazoa</taxon>
        <taxon>Chordata</taxon>
        <taxon>Craniata</taxon>
        <taxon>Vertebrata</taxon>
        <taxon>Euteleostomi</taxon>
        <taxon>Mammalia</taxon>
        <taxon>Eutheria</taxon>
        <taxon>Euarchontoglires</taxon>
        <taxon>Glires</taxon>
        <taxon>Rodentia</taxon>
        <taxon>Myomorpha</taxon>
        <taxon>Muroidea</taxon>
        <taxon>Muridae</taxon>
        <taxon>Murinae</taxon>
        <taxon>Mus</taxon>
        <taxon>Mus</taxon>
    </lineage>
</organism>
<name>SNTG1_MOUSE</name>
<protein>
    <recommendedName>
        <fullName>Gamma-1-syntrophin</fullName>
        <shortName>G1SYN</shortName>
    </recommendedName>
    <alternativeName>
        <fullName>Syntrophin-4</fullName>
        <shortName>SYN4</shortName>
    </alternativeName>
</protein>
<comment type="function">
    <text evidence="1">Adapter protein that binds to and probably organizes the subcellular localization of a variety of proteins. May link various receptors to the actin cytoskeleton and the dystrophin glycoprotein complex. May participate in regulating the subcellular location of diacylglycerol kinase-zeta to ensure that diacylglycerol is rapidly inactivated following receptor activation (By similarity).</text>
</comment>
<comment type="subunit">
    <text evidence="1">Interacts with the dystrophin protein DMD and related proteins DTNA and DTNB. Interacts with DGKZ (By similarity).</text>
</comment>
<comment type="subcellular location">
    <subcellularLocation>
        <location evidence="1">Cytoplasm</location>
        <location evidence="1">Cytoskeleton</location>
    </subcellularLocation>
    <subcellularLocation>
        <location evidence="1">Nucleus</location>
    </subcellularLocation>
    <text evidence="1">Mainly cytoplasmic and weakly nuclear.</text>
</comment>
<comment type="alternative products">
    <event type="alternative splicing"/>
    <isoform>
        <id>Q925E1-1</id>
        <name>1</name>
        <sequence type="displayed"/>
    </isoform>
    <isoform>
        <id>Q925E1-2</id>
        <name>2</name>
        <sequence type="described" ref="VSP_006361 VSP_006362"/>
    </isoform>
</comment>
<comment type="domain">
    <text evidence="1">The PDZ domain binds to the last three or four amino acids of DGKZ. The association with dystrophin or related proteins probably leaves the PDZ domain available to recruit proteins to the membrane (By similarity).</text>
</comment>
<comment type="similarity">
    <text evidence="5">Belongs to the syntrophin family.</text>
</comment>
<proteinExistence type="evidence at transcript level"/>
<keyword id="KW-0009">Actin-binding</keyword>
<keyword id="KW-0025">Alternative splicing</keyword>
<keyword id="KW-0963">Cytoplasm</keyword>
<keyword id="KW-0206">Cytoskeleton</keyword>
<keyword id="KW-0539">Nucleus</keyword>
<keyword id="KW-1185">Reference proteome</keyword>